<sequence length="219" mass="24863">MQEHSPIVLLGGTFDPIHFGHLRTALELQQHFGESAEVRLIPCGDPRHRSAPKASGEHRLAMLRLALEGEPSLRIDEVEVRRTGASYTVDTLLELRQEVGNLRPLIFVMGTDAFESLPKWRRWLEIIQLAHIMVVNRPGWSFCEQGELGDFLRQHSAESNNDLIRQPAGKVGFITLTQMGISSSKVRELIGLRLSPRFLLPDSVWRYIRQHRLYGAVNA</sequence>
<comment type="function">
    <text evidence="1">Catalyzes the reversible adenylation of nicotinate mononucleotide (NaMN) to nicotinic acid adenine dinucleotide (NaAD).</text>
</comment>
<comment type="catalytic activity">
    <reaction evidence="1">
        <text>nicotinate beta-D-ribonucleotide + ATP + H(+) = deamido-NAD(+) + diphosphate</text>
        <dbReference type="Rhea" id="RHEA:22860"/>
        <dbReference type="ChEBI" id="CHEBI:15378"/>
        <dbReference type="ChEBI" id="CHEBI:30616"/>
        <dbReference type="ChEBI" id="CHEBI:33019"/>
        <dbReference type="ChEBI" id="CHEBI:57502"/>
        <dbReference type="ChEBI" id="CHEBI:58437"/>
        <dbReference type="EC" id="2.7.7.18"/>
    </reaction>
</comment>
<comment type="pathway">
    <text evidence="1">Cofactor biosynthesis; NAD(+) biosynthesis; deamido-NAD(+) from nicotinate D-ribonucleotide: step 1/1.</text>
</comment>
<comment type="similarity">
    <text evidence="1">Belongs to the NadD family.</text>
</comment>
<dbReference type="EC" id="2.7.7.18" evidence="1"/>
<dbReference type="EMBL" id="CP000155">
    <property type="protein sequence ID" value="ABC32496.1"/>
    <property type="molecule type" value="Genomic_DNA"/>
</dbReference>
<dbReference type="RefSeq" id="WP_011399555.1">
    <property type="nucleotide sequence ID" value="NC_007645.1"/>
</dbReference>
<dbReference type="SMR" id="Q2SA28"/>
<dbReference type="STRING" id="349521.HCH_05846"/>
<dbReference type="KEGG" id="hch:HCH_05846"/>
<dbReference type="eggNOG" id="COG1057">
    <property type="taxonomic scope" value="Bacteria"/>
</dbReference>
<dbReference type="HOGENOM" id="CLU_069765_0_0_6"/>
<dbReference type="OrthoDB" id="5295945at2"/>
<dbReference type="UniPathway" id="UPA00253">
    <property type="reaction ID" value="UER00332"/>
</dbReference>
<dbReference type="Proteomes" id="UP000000238">
    <property type="component" value="Chromosome"/>
</dbReference>
<dbReference type="GO" id="GO:0005524">
    <property type="term" value="F:ATP binding"/>
    <property type="evidence" value="ECO:0007669"/>
    <property type="project" value="UniProtKB-KW"/>
</dbReference>
<dbReference type="GO" id="GO:0004515">
    <property type="term" value="F:nicotinate-nucleotide adenylyltransferase activity"/>
    <property type="evidence" value="ECO:0007669"/>
    <property type="project" value="UniProtKB-UniRule"/>
</dbReference>
<dbReference type="GO" id="GO:0009435">
    <property type="term" value="P:NAD biosynthetic process"/>
    <property type="evidence" value="ECO:0007669"/>
    <property type="project" value="UniProtKB-UniRule"/>
</dbReference>
<dbReference type="CDD" id="cd02165">
    <property type="entry name" value="NMNAT"/>
    <property type="match status" value="1"/>
</dbReference>
<dbReference type="Gene3D" id="3.40.50.620">
    <property type="entry name" value="HUPs"/>
    <property type="match status" value="1"/>
</dbReference>
<dbReference type="HAMAP" id="MF_00244">
    <property type="entry name" value="NaMN_adenylyltr"/>
    <property type="match status" value="1"/>
</dbReference>
<dbReference type="InterPro" id="IPR004821">
    <property type="entry name" value="Cyt_trans-like"/>
</dbReference>
<dbReference type="InterPro" id="IPR005248">
    <property type="entry name" value="NadD/NMNAT"/>
</dbReference>
<dbReference type="InterPro" id="IPR014729">
    <property type="entry name" value="Rossmann-like_a/b/a_fold"/>
</dbReference>
<dbReference type="NCBIfam" id="TIGR00125">
    <property type="entry name" value="cyt_tran_rel"/>
    <property type="match status" value="1"/>
</dbReference>
<dbReference type="NCBIfam" id="TIGR00482">
    <property type="entry name" value="nicotinate (nicotinamide) nucleotide adenylyltransferase"/>
    <property type="match status" value="1"/>
</dbReference>
<dbReference type="NCBIfam" id="NF000839">
    <property type="entry name" value="PRK00071.1-1"/>
    <property type="match status" value="1"/>
</dbReference>
<dbReference type="NCBIfam" id="NF000840">
    <property type="entry name" value="PRK00071.1-3"/>
    <property type="match status" value="1"/>
</dbReference>
<dbReference type="PANTHER" id="PTHR39321">
    <property type="entry name" value="NICOTINATE-NUCLEOTIDE ADENYLYLTRANSFERASE-RELATED"/>
    <property type="match status" value="1"/>
</dbReference>
<dbReference type="PANTHER" id="PTHR39321:SF3">
    <property type="entry name" value="PHOSPHOPANTETHEINE ADENYLYLTRANSFERASE"/>
    <property type="match status" value="1"/>
</dbReference>
<dbReference type="Pfam" id="PF01467">
    <property type="entry name" value="CTP_transf_like"/>
    <property type="match status" value="1"/>
</dbReference>
<dbReference type="SUPFAM" id="SSF52374">
    <property type="entry name" value="Nucleotidylyl transferase"/>
    <property type="match status" value="1"/>
</dbReference>
<keyword id="KW-0067">ATP-binding</keyword>
<keyword id="KW-0520">NAD</keyword>
<keyword id="KW-0547">Nucleotide-binding</keyword>
<keyword id="KW-0548">Nucleotidyltransferase</keyword>
<keyword id="KW-0662">Pyridine nucleotide biosynthesis</keyword>
<keyword id="KW-1185">Reference proteome</keyword>
<keyword id="KW-0808">Transferase</keyword>
<proteinExistence type="inferred from homology"/>
<feature type="chain" id="PRO_0000336696" description="Probable nicotinate-nucleotide adenylyltransferase">
    <location>
        <begin position="1"/>
        <end position="219"/>
    </location>
</feature>
<reference key="1">
    <citation type="journal article" date="2005" name="Nucleic Acids Res.">
        <title>Genomic blueprint of Hahella chejuensis, a marine microbe producing an algicidal agent.</title>
        <authorList>
            <person name="Jeong H."/>
            <person name="Yim J.H."/>
            <person name="Lee C."/>
            <person name="Choi S.-H."/>
            <person name="Park Y.K."/>
            <person name="Yoon S.H."/>
            <person name="Hur C.-G."/>
            <person name="Kang H.-Y."/>
            <person name="Kim D."/>
            <person name="Lee H.H."/>
            <person name="Park K.H."/>
            <person name="Park S.-H."/>
            <person name="Park H.-S."/>
            <person name="Lee H.K."/>
            <person name="Oh T.K."/>
            <person name="Kim J.F."/>
        </authorList>
    </citation>
    <scope>NUCLEOTIDE SEQUENCE [LARGE SCALE GENOMIC DNA]</scope>
    <source>
        <strain>KCTC 2396</strain>
    </source>
</reference>
<protein>
    <recommendedName>
        <fullName evidence="1">Probable nicotinate-nucleotide adenylyltransferase</fullName>
        <ecNumber evidence="1">2.7.7.18</ecNumber>
    </recommendedName>
    <alternativeName>
        <fullName evidence="1">Deamido-NAD(+) diphosphorylase</fullName>
    </alternativeName>
    <alternativeName>
        <fullName evidence="1">Deamido-NAD(+) pyrophosphorylase</fullName>
    </alternativeName>
    <alternativeName>
        <fullName evidence="1">Nicotinate mononucleotide adenylyltransferase</fullName>
        <shortName evidence="1">NaMN adenylyltransferase</shortName>
    </alternativeName>
</protein>
<organism>
    <name type="scientific">Hahella chejuensis (strain KCTC 2396)</name>
    <dbReference type="NCBI Taxonomy" id="349521"/>
    <lineage>
        <taxon>Bacteria</taxon>
        <taxon>Pseudomonadati</taxon>
        <taxon>Pseudomonadota</taxon>
        <taxon>Gammaproteobacteria</taxon>
        <taxon>Oceanospirillales</taxon>
        <taxon>Hahellaceae</taxon>
        <taxon>Hahella</taxon>
    </lineage>
</organism>
<accession>Q2SA28</accession>
<name>NADD_HAHCH</name>
<evidence type="ECO:0000255" key="1">
    <source>
        <dbReference type="HAMAP-Rule" id="MF_00244"/>
    </source>
</evidence>
<gene>
    <name evidence="1" type="primary">nadD</name>
    <name type="ordered locus">HCH_05846</name>
</gene>